<sequence length="702" mass="79987">MRLSVIILAIFMISLFIMAAFLFFKRRRLDGSYHLPSLAKPTYRKLTQDDYGVISDYLSYFGTSKFSAGYSLQNFPEIPTKGEVVTTLRNIVNRFAGSSEGINHWRYYIDAVEIHIPPLLVPYLQQENVLDVVCTPSIPIVIGVNGHFLKDEKSHFSALSLKQLSEPILSNGTSTIQKNEGDAAHLLHIRQETNEEYRLHHSSGFWNGSLICLGLILWLTALMMPQVFLPWIMAAGGTFLVLGLFLIYRPIIKSRKQEVHCFKGRLKRWGLFGNFDHGQVKNISLGGIDLVYPPHWEPYIQNDIDKVTYLEMYPNHHVIKQGPYLSLHDEEKNYPYKRYIKNIIFVVCSLFIIGMLYLYQPLSLSMKLTFSWIKESEPHLVTNFTELETAKLHVGDIIQAKGVGMCYMPPNLSSKNNKTIFAPFDCSGIYWNNSNPMPMPESSTIEKAAALLYLVEEQLHPVSNNRVNPSLGQAITKSGMNLLDNFDGIILKTQDLCPRENECIRLKMALVNLSNVNDWPSLVQRAESGKLTGTNVLLRAVSAEALEKLVDTTTSSFIYREIDKAAILLNSPPPGGVLLISDERKQLVDYASNTNSVFEPTPLEQWRELQRLSDILLHTPFNTGGVITGMVIDANGTLQIFLHSMPDSMTLLYYIGNTLLLFFAIGFLILNLFFIIRRRRQNNQRMHKISQYYEHCFYRPPQ</sequence>
<dbReference type="EMBL" id="U66822">
    <property type="protein sequence ID" value="AAC28926.1"/>
    <property type="molecule type" value="Genomic_DNA"/>
</dbReference>
<dbReference type="SMR" id="O86988"/>
<dbReference type="STRING" id="584.AOUC001_19620"/>
<dbReference type="GO" id="GO:0005886">
    <property type="term" value="C:plasma membrane"/>
    <property type="evidence" value="ECO:0007669"/>
    <property type="project" value="UniProtKB-SubCell"/>
</dbReference>
<dbReference type="InterPro" id="IPR010771">
    <property type="entry name" value="IgaA"/>
</dbReference>
<dbReference type="Pfam" id="PF07095">
    <property type="entry name" value="IgaA"/>
    <property type="match status" value="1"/>
</dbReference>
<feature type="chain" id="PRO_0000215019" description="Flagellar operon control protein UmoB">
    <location>
        <begin position="1"/>
        <end position="702"/>
    </location>
</feature>
<feature type="transmembrane region" description="Helical" evidence="1">
    <location>
        <begin position="4"/>
        <end position="24"/>
    </location>
</feature>
<feature type="transmembrane region" description="Helical" evidence="1">
    <location>
        <begin position="204"/>
        <end position="224"/>
    </location>
</feature>
<feature type="transmembrane region" description="Helical" evidence="1">
    <location>
        <begin position="227"/>
        <end position="247"/>
    </location>
</feature>
<feature type="transmembrane region" description="Helical" evidence="1">
    <location>
        <begin position="343"/>
        <end position="363"/>
    </location>
</feature>
<feature type="transmembrane region" description="Helical" evidence="1">
    <location>
        <begin position="656"/>
        <end position="676"/>
    </location>
</feature>
<proteinExistence type="inferred from homology"/>
<reference key="1">
    <citation type="journal article" date="1998" name="Mol. Microbiol.">
        <title>Novel genes that upregulate the Proteus mirabilis flhDC master operon controlling flagellar biogenesis and swarming.</title>
        <authorList>
            <person name="Dufour A."/>
            <person name="Furness R.B."/>
            <person name="Hughes C."/>
        </authorList>
    </citation>
    <scope>NUCLEOTIDE SEQUENCE [GENOMIC DNA]</scope>
    <source>
        <strain>U6450</strain>
    </source>
</reference>
<keyword id="KW-0997">Cell inner membrane</keyword>
<keyword id="KW-1003">Cell membrane</keyword>
<keyword id="KW-0472">Membrane</keyword>
<keyword id="KW-0812">Transmembrane</keyword>
<keyword id="KW-1133">Transmembrane helix</keyword>
<evidence type="ECO:0000255" key="1"/>
<evidence type="ECO:0000305" key="2"/>
<comment type="function">
    <text>Up-regulator of flagellar flhDC master operon.</text>
</comment>
<comment type="subcellular location">
    <subcellularLocation>
        <location evidence="2">Cell inner membrane</location>
        <topology evidence="2">Multi-pass membrane protein</topology>
    </subcellularLocation>
</comment>
<comment type="similarity">
    <text evidence="2">Belongs to the IgaA family.</text>
</comment>
<name>UMOB_PROMI</name>
<accession>O86988</accession>
<protein>
    <recommendedName>
        <fullName>Flagellar operon control protein UmoB</fullName>
    </recommendedName>
</protein>
<gene>
    <name type="primary">umoB</name>
</gene>
<organism>
    <name type="scientific">Proteus mirabilis</name>
    <dbReference type="NCBI Taxonomy" id="584"/>
    <lineage>
        <taxon>Bacteria</taxon>
        <taxon>Pseudomonadati</taxon>
        <taxon>Pseudomonadota</taxon>
        <taxon>Gammaproteobacteria</taxon>
        <taxon>Enterobacterales</taxon>
        <taxon>Morganellaceae</taxon>
        <taxon>Proteus</taxon>
    </lineage>
</organism>